<proteinExistence type="inferred from homology"/>
<reference key="1">
    <citation type="journal article" date="2006" name="Proc. Natl. Acad. Sci. U.S.A.">
        <title>Comparative genomics of the lactic acid bacteria.</title>
        <authorList>
            <person name="Makarova K.S."/>
            <person name="Slesarev A."/>
            <person name="Wolf Y.I."/>
            <person name="Sorokin A."/>
            <person name="Mirkin B."/>
            <person name="Koonin E.V."/>
            <person name="Pavlov A."/>
            <person name="Pavlova N."/>
            <person name="Karamychev V."/>
            <person name="Polouchine N."/>
            <person name="Shakhova V."/>
            <person name="Grigoriev I."/>
            <person name="Lou Y."/>
            <person name="Rohksar D."/>
            <person name="Lucas S."/>
            <person name="Huang K."/>
            <person name="Goodstein D.M."/>
            <person name="Hawkins T."/>
            <person name="Plengvidhya V."/>
            <person name="Welker D."/>
            <person name="Hughes J."/>
            <person name="Goh Y."/>
            <person name="Benson A."/>
            <person name="Baldwin K."/>
            <person name="Lee J.-H."/>
            <person name="Diaz-Muniz I."/>
            <person name="Dosti B."/>
            <person name="Smeianov V."/>
            <person name="Wechter W."/>
            <person name="Barabote R."/>
            <person name="Lorca G."/>
            <person name="Altermann E."/>
            <person name="Barrangou R."/>
            <person name="Ganesan B."/>
            <person name="Xie Y."/>
            <person name="Rawsthorne H."/>
            <person name="Tamir D."/>
            <person name="Parker C."/>
            <person name="Breidt F."/>
            <person name="Broadbent J.R."/>
            <person name="Hutkins R."/>
            <person name="O'Sullivan D."/>
            <person name="Steele J."/>
            <person name="Unlu G."/>
            <person name="Saier M.H. Jr."/>
            <person name="Klaenhammer T."/>
            <person name="Richardson P."/>
            <person name="Kozyavkin S."/>
            <person name="Weimer B.C."/>
            <person name="Mills D.A."/>
        </authorList>
    </citation>
    <scope>NUCLEOTIDE SEQUENCE [LARGE SCALE GENOMIC DNA]</scope>
    <source>
        <strain>ATCC BAA-331 / PSU-1</strain>
    </source>
</reference>
<name>TRUA_OENOB</name>
<feature type="chain" id="PRO_1000017127" description="tRNA pseudouridine synthase A">
    <location>
        <begin position="1"/>
        <end position="252"/>
    </location>
</feature>
<feature type="active site" description="Nucleophile" evidence="1">
    <location>
        <position position="54"/>
    </location>
</feature>
<feature type="binding site" evidence="1">
    <location>
        <position position="112"/>
    </location>
    <ligand>
        <name>substrate</name>
    </ligand>
</feature>
<keyword id="KW-0413">Isomerase</keyword>
<keyword id="KW-1185">Reference proteome</keyword>
<keyword id="KW-0819">tRNA processing</keyword>
<comment type="function">
    <text evidence="1">Formation of pseudouridine at positions 38, 39 and 40 in the anticodon stem and loop of transfer RNAs.</text>
</comment>
<comment type="catalytic activity">
    <reaction evidence="1">
        <text>uridine(38/39/40) in tRNA = pseudouridine(38/39/40) in tRNA</text>
        <dbReference type="Rhea" id="RHEA:22376"/>
        <dbReference type="Rhea" id="RHEA-COMP:10085"/>
        <dbReference type="Rhea" id="RHEA-COMP:10087"/>
        <dbReference type="ChEBI" id="CHEBI:65314"/>
        <dbReference type="ChEBI" id="CHEBI:65315"/>
        <dbReference type="EC" id="5.4.99.12"/>
    </reaction>
</comment>
<comment type="subunit">
    <text evidence="1">Homodimer.</text>
</comment>
<comment type="similarity">
    <text evidence="1">Belongs to the tRNA pseudouridine synthase TruA family.</text>
</comment>
<dbReference type="EC" id="5.4.99.12" evidence="1"/>
<dbReference type="EMBL" id="CP000411">
    <property type="protein sequence ID" value="ABJ56568.1"/>
    <property type="molecule type" value="Genomic_DNA"/>
</dbReference>
<dbReference type="RefSeq" id="WP_002818487.1">
    <property type="nucleotide sequence ID" value="NC_008528.1"/>
</dbReference>
<dbReference type="SMR" id="Q04G54"/>
<dbReference type="STRING" id="203123.OEOE_0626"/>
<dbReference type="GeneID" id="75065447"/>
<dbReference type="KEGG" id="ooe:OEOE_0626"/>
<dbReference type="eggNOG" id="COG0101">
    <property type="taxonomic scope" value="Bacteria"/>
</dbReference>
<dbReference type="HOGENOM" id="CLU_014673_0_1_9"/>
<dbReference type="Proteomes" id="UP000000774">
    <property type="component" value="Chromosome"/>
</dbReference>
<dbReference type="GO" id="GO:0003723">
    <property type="term" value="F:RNA binding"/>
    <property type="evidence" value="ECO:0007669"/>
    <property type="project" value="InterPro"/>
</dbReference>
<dbReference type="GO" id="GO:0160147">
    <property type="term" value="F:tRNA pseudouridine(38-40) synthase activity"/>
    <property type="evidence" value="ECO:0007669"/>
    <property type="project" value="UniProtKB-EC"/>
</dbReference>
<dbReference type="GO" id="GO:0031119">
    <property type="term" value="P:tRNA pseudouridine synthesis"/>
    <property type="evidence" value="ECO:0007669"/>
    <property type="project" value="UniProtKB-UniRule"/>
</dbReference>
<dbReference type="CDD" id="cd02570">
    <property type="entry name" value="PseudoU_synth_EcTruA"/>
    <property type="match status" value="1"/>
</dbReference>
<dbReference type="FunFam" id="3.30.70.580:FF:000001">
    <property type="entry name" value="tRNA pseudouridine synthase A"/>
    <property type="match status" value="1"/>
</dbReference>
<dbReference type="Gene3D" id="3.30.70.660">
    <property type="entry name" value="Pseudouridine synthase I, catalytic domain, C-terminal subdomain"/>
    <property type="match status" value="1"/>
</dbReference>
<dbReference type="Gene3D" id="3.30.70.580">
    <property type="entry name" value="Pseudouridine synthase I, catalytic domain, N-terminal subdomain"/>
    <property type="match status" value="1"/>
</dbReference>
<dbReference type="HAMAP" id="MF_00171">
    <property type="entry name" value="TruA"/>
    <property type="match status" value="1"/>
</dbReference>
<dbReference type="InterPro" id="IPR020103">
    <property type="entry name" value="PsdUridine_synth_cat_dom_sf"/>
</dbReference>
<dbReference type="InterPro" id="IPR001406">
    <property type="entry name" value="PsdUridine_synth_TruA"/>
</dbReference>
<dbReference type="InterPro" id="IPR020097">
    <property type="entry name" value="PsdUridine_synth_TruA_a/b_dom"/>
</dbReference>
<dbReference type="InterPro" id="IPR020095">
    <property type="entry name" value="PsdUridine_synth_TruA_C"/>
</dbReference>
<dbReference type="InterPro" id="IPR020094">
    <property type="entry name" value="TruA/RsuA/RluB/E/F_N"/>
</dbReference>
<dbReference type="NCBIfam" id="TIGR00071">
    <property type="entry name" value="hisT_truA"/>
    <property type="match status" value="1"/>
</dbReference>
<dbReference type="PANTHER" id="PTHR11142">
    <property type="entry name" value="PSEUDOURIDYLATE SYNTHASE"/>
    <property type="match status" value="1"/>
</dbReference>
<dbReference type="PANTHER" id="PTHR11142:SF0">
    <property type="entry name" value="TRNA PSEUDOURIDINE SYNTHASE-LIKE 1"/>
    <property type="match status" value="1"/>
</dbReference>
<dbReference type="Pfam" id="PF01416">
    <property type="entry name" value="PseudoU_synth_1"/>
    <property type="match status" value="2"/>
</dbReference>
<dbReference type="PIRSF" id="PIRSF001430">
    <property type="entry name" value="tRNA_psdUrid_synth"/>
    <property type="match status" value="1"/>
</dbReference>
<dbReference type="SUPFAM" id="SSF55120">
    <property type="entry name" value="Pseudouridine synthase"/>
    <property type="match status" value="1"/>
</dbReference>
<accession>Q04G54</accession>
<sequence>MQNYKVTISYDGHYFEGFQTQNRPGSRTVQDELIKVVSKMAKTKIKVIGASRTDAGVHANGQVINFIFPFDLNEKAILMGMNSQLPTDILVKKVEKVPINFNARHSSHRKRYLYRVSTSKFIDPFKRFYTGHYFWNLDTNKIQEALPDLIGEHDFSSFAASGNQTATTIRTVTKAELKIFPKNNELLFTFEGNAFLYNQIRIMVGVLLEIGNGTRPVHDIIRLIKIKDRQQARFTAPASGLYLDEVYYESMD</sequence>
<protein>
    <recommendedName>
        <fullName evidence="1">tRNA pseudouridine synthase A</fullName>
        <ecNumber evidence="1">5.4.99.12</ecNumber>
    </recommendedName>
    <alternativeName>
        <fullName evidence="1">tRNA pseudouridine(38-40) synthase</fullName>
    </alternativeName>
    <alternativeName>
        <fullName evidence="1">tRNA pseudouridylate synthase I</fullName>
    </alternativeName>
    <alternativeName>
        <fullName evidence="1">tRNA-uridine isomerase I</fullName>
    </alternativeName>
</protein>
<organism>
    <name type="scientific">Oenococcus oeni (strain ATCC BAA-331 / PSU-1)</name>
    <dbReference type="NCBI Taxonomy" id="203123"/>
    <lineage>
        <taxon>Bacteria</taxon>
        <taxon>Bacillati</taxon>
        <taxon>Bacillota</taxon>
        <taxon>Bacilli</taxon>
        <taxon>Lactobacillales</taxon>
        <taxon>Lactobacillaceae</taxon>
        <taxon>Oenococcus</taxon>
    </lineage>
</organism>
<evidence type="ECO:0000255" key="1">
    <source>
        <dbReference type="HAMAP-Rule" id="MF_00171"/>
    </source>
</evidence>
<gene>
    <name evidence="1" type="primary">truA</name>
    <name type="ordered locus">OEOE_0626</name>
</gene>